<name>HDA11_MOUSE</name>
<feature type="chain" id="PRO_0000114717" description="Histone deacetylase 11">
    <location>
        <begin position="1"/>
        <end position="347"/>
    </location>
</feature>
<feature type="region of interest" description="Histone deacetylase">
    <location>
        <begin position="14"/>
        <end position="318"/>
    </location>
</feature>
<feature type="active site" evidence="1">
    <location>
        <position position="143"/>
    </location>
</feature>
<keyword id="KW-0156">Chromatin regulator</keyword>
<keyword id="KW-0378">Hydrolase</keyword>
<keyword id="KW-0539">Nucleus</keyword>
<keyword id="KW-1185">Reference proteome</keyword>
<keyword id="KW-0678">Repressor</keyword>
<keyword id="KW-0804">Transcription</keyword>
<keyword id="KW-0805">Transcription regulation</keyword>
<accession>Q91WA3</accession>
<evidence type="ECO:0000250" key="1"/>
<evidence type="ECO:0000305" key="2"/>
<dbReference type="EC" id="3.5.1.98"/>
<dbReference type="EMBL" id="BC016208">
    <property type="protein sequence ID" value="AAH16208.1"/>
    <property type="molecule type" value="mRNA"/>
</dbReference>
<dbReference type="CCDS" id="CCDS20366.1"/>
<dbReference type="RefSeq" id="NP_659168.1">
    <property type="nucleotide sequence ID" value="NM_144919.2"/>
</dbReference>
<dbReference type="SMR" id="Q91WA3"/>
<dbReference type="BioGRID" id="231232">
    <property type="interactions" value="5"/>
</dbReference>
<dbReference type="FunCoup" id="Q91WA3">
    <property type="interactions" value="662"/>
</dbReference>
<dbReference type="IntAct" id="Q91WA3">
    <property type="interactions" value="1"/>
</dbReference>
<dbReference type="MINT" id="Q91WA3"/>
<dbReference type="STRING" id="10090.ENSMUSP00000043828"/>
<dbReference type="BindingDB" id="Q91WA3"/>
<dbReference type="ChEMBL" id="CHEMBL3832944"/>
<dbReference type="iPTMnet" id="Q91WA3"/>
<dbReference type="PhosphoSitePlus" id="Q91WA3"/>
<dbReference type="PaxDb" id="10090-ENSMUSP00000043828"/>
<dbReference type="ProteomicsDB" id="269818"/>
<dbReference type="Antibodypedia" id="10901">
    <property type="antibodies" value="448 antibodies from 38 providers"/>
</dbReference>
<dbReference type="DNASU" id="232232"/>
<dbReference type="Ensembl" id="ENSMUST00000041736.11">
    <property type="protein sequence ID" value="ENSMUSP00000043828.5"/>
    <property type="gene ID" value="ENSMUSG00000034245.11"/>
</dbReference>
<dbReference type="GeneID" id="232232"/>
<dbReference type="KEGG" id="mmu:232232"/>
<dbReference type="UCSC" id="uc009cxv.1">
    <property type="organism name" value="mouse"/>
</dbReference>
<dbReference type="AGR" id="MGI:2385252"/>
<dbReference type="CTD" id="79885"/>
<dbReference type="MGI" id="MGI:2385252">
    <property type="gene designation" value="Hdac11"/>
</dbReference>
<dbReference type="VEuPathDB" id="HostDB:ENSMUSG00000034245"/>
<dbReference type="eggNOG" id="KOG1344">
    <property type="taxonomic scope" value="Eukaryota"/>
</dbReference>
<dbReference type="GeneTree" id="ENSGT00940000156308"/>
<dbReference type="HOGENOM" id="CLU_007727_1_1_1"/>
<dbReference type="InParanoid" id="Q91WA3"/>
<dbReference type="OMA" id="EIGFPWS"/>
<dbReference type="OrthoDB" id="437693at2759"/>
<dbReference type="PhylomeDB" id="Q91WA3"/>
<dbReference type="TreeFam" id="TF106176"/>
<dbReference type="Reactome" id="R-MMU-350054">
    <property type="pathway name" value="Notch-HLH transcription pathway"/>
</dbReference>
<dbReference type="BioGRID-ORCS" id="232232">
    <property type="hits" value="4 hits in 82 CRISPR screens"/>
</dbReference>
<dbReference type="CD-CODE" id="CE726F99">
    <property type="entry name" value="Postsynaptic density"/>
</dbReference>
<dbReference type="PRO" id="PR:Q91WA3"/>
<dbReference type="Proteomes" id="UP000000589">
    <property type="component" value="Chromosome 6"/>
</dbReference>
<dbReference type="RNAct" id="Q91WA3">
    <property type="molecule type" value="protein"/>
</dbReference>
<dbReference type="Bgee" id="ENSMUSG00000034245">
    <property type="expression patterns" value="Expressed in dorsomedial nucleus of hypothalamus and 234 other cell types or tissues"/>
</dbReference>
<dbReference type="ExpressionAtlas" id="Q91WA3">
    <property type="expression patterns" value="baseline and differential"/>
</dbReference>
<dbReference type="GO" id="GO:0005737">
    <property type="term" value="C:cytoplasm"/>
    <property type="evidence" value="ECO:0000304"/>
    <property type="project" value="UniProtKB"/>
</dbReference>
<dbReference type="GO" id="GO:0000118">
    <property type="term" value="C:histone deacetylase complex"/>
    <property type="evidence" value="ECO:0000304"/>
    <property type="project" value="UniProtKB"/>
</dbReference>
<dbReference type="GO" id="GO:0005634">
    <property type="term" value="C:nucleus"/>
    <property type="evidence" value="ECO:0000304"/>
    <property type="project" value="UniProtKB"/>
</dbReference>
<dbReference type="GO" id="GO:0005886">
    <property type="term" value="C:plasma membrane"/>
    <property type="evidence" value="ECO:0007669"/>
    <property type="project" value="Ensembl"/>
</dbReference>
<dbReference type="GO" id="GO:0140297">
    <property type="term" value="F:DNA-binding transcription factor binding"/>
    <property type="evidence" value="ECO:0000304"/>
    <property type="project" value="UniProtKB"/>
</dbReference>
<dbReference type="GO" id="GO:0004407">
    <property type="term" value="F:histone deacetylase activity"/>
    <property type="evidence" value="ECO:0000304"/>
    <property type="project" value="UniProtKB"/>
</dbReference>
<dbReference type="GO" id="GO:0141221">
    <property type="term" value="F:histone deacetylase activity, hydrolytic mechanism"/>
    <property type="evidence" value="ECO:0007669"/>
    <property type="project" value="UniProtKB-EC"/>
</dbReference>
<dbReference type="GO" id="GO:0006325">
    <property type="term" value="P:chromatin organization"/>
    <property type="evidence" value="ECO:0000304"/>
    <property type="project" value="UniProtKB"/>
</dbReference>
<dbReference type="CDD" id="cd09993">
    <property type="entry name" value="HDAC_classIV"/>
    <property type="match status" value="1"/>
</dbReference>
<dbReference type="FunFam" id="3.40.800.20:FF:000009">
    <property type="entry name" value="Histone deacetylase 11"/>
    <property type="match status" value="1"/>
</dbReference>
<dbReference type="Gene3D" id="3.40.800.20">
    <property type="entry name" value="Histone deacetylase domain"/>
    <property type="match status" value="1"/>
</dbReference>
<dbReference type="InterPro" id="IPR044150">
    <property type="entry name" value="HDAC_classIV"/>
</dbReference>
<dbReference type="InterPro" id="IPR050284">
    <property type="entry name" value="HDAC_PDAC"/>
</dbReference>
<dbReference type="InterPro" id="IPR000286">
    <property type="entry name" value="His_deacetylse"/>
</dbReference>
<dbReference type="InterPro" id="IPR023801">
    <property type="entry name" value="His_deacetylse_dom"/>
</dbReference>
<dbReference type="InterPro" id="IPR037138">
    <property type="entry name" value="His_deacetylse_dom_sf"/>
</dbReference>
<dbReference type="InterPro" id="IPR023696">
    <property type="entry name" value="Ureohydrolase_dom_sf"/>
</dbReference>
<dbReference type="PANTHER" id="PTHR10625:SF23">
    <property type="entry name" value="HISTONE DEACETYLASE 11"/>
    <property type="match status" value="1"/>
</dbReference>
<dbReference type="PANTHER" id="PTHR10625">
    <property type="entry name" value="HISTONE DEACETYLASE HDAC1-RELATED"/>
    <property type="match status" value="1"/>
</dbReference>
<dbReference type="Pfam" id="PF00850">
    <property type="entry name" value="Hist_deacetyl"/>
    <property type="match status" value="1"/>
</dbReference>
<dbReference type="PRINTS" id="PR01270">
    <property type="entry name" value="HDASUPER"/>
</dbReference>
<dbReference type="SUPFAM" id="SSF52768">
    <property type="entry name" value="Arginase/deacetylase"/>
    <property type="match status" value="1"/>
</dbReference>
<sequence length="347" mass="39157">MPHATQLYQHVPEKRWPIVYSPRYNITFMGLEKLHPFDAGKWGKVINFLKEEKLLSDGMLVEAREASEEDLLVVHTRRYLNELKWSFVVATITEIPPVIFLPNFLVQRKVLRPLRTQTGGTIMAGKLAVERGWAINVGGGFHHCSSDRGGGFCAYADITLAIKFLFERVEGISRATIIDLDAHQGNGHERDFMGDKRVYIMDVYNRHIYPGDRFAKEAIRRKVELEWGTEDEEYLEKVERNVRRSLQEHLPDVVVYNAGTDVLEGDRLGGLSISPAGIVKRDEVVFRVVRAHDIPILMVTSGGYQKRTARIIADSILNLHDLGLIGPEFPCVSAQNSGIPLLSCAVP</sequence>
<protein>
    <recommendedName>
        <fullName>Histone deacetylase 11</fullName>
        <shortName>HD11</shortName>
        <ecNumber>3.5.1.98</ecNumber>
    </recommendedName>
</protein>
<organism>
    <name type="scientific">Mus musculus</name>
    <name type="common">Mouse</name>
    <dbReference type="NCBI Taxonomy" id="10090"/>
    <lineage>
        <taxon>Eukaryota</taxon>
        <taxon>Metazoa</taxon>
        <taxon>Chordata</taxon>
        <taxon>Craniata</taxon>
        <taxon>Vertebrata</taxon>
        <taxon>Euteleostomi</taxon>
        <taxon>Mammalia</taxon>
        <taxon>Eutheria</taxon>
        <taxon>Euarchontoglires</taxon>
        <taxon>Glires</taxon>
        <taxon>Rodentia</taxon>
        <taxon>Myomorpha</taxon>
        <taxon>Muroidea</taxon>
        <taxon>Muridae</taxon>
        <taxon>Murinae</taxon>
        <taxon>Mus</taxon>
        <taxon>Mus</taxon>
    </lineage>
</organism>
<reference key="1">
    <citation type="journal article" date="2004" name="Genome Res.">
        <title>The status, quality, and expansion of the NIH full-length cDNA project: the Mammalian Gene Collection (MGC).</title>
        <authorList>
            <consortium name="The MGC Project Team"/>
        </authorList>
    </citation>
    <scope>NUCLEOTIDE SEQUENCE [LARGE SCALE MRNA]</scope>
    <source>
        <tissue>Salivary gland</tissue>
    </source>
</reference>
<reference key="2">
    <citation type="journal article" date="2006" name="Mol. Cell. Proteomics">
        <title>Comprehensive identification of phosphorylation sites in postsynaptic density preparations.</title>
        <authorList>
            <person name="Trinidad J.C."/>
            <person name="Specht C.G."/>
            <person name="Thalhammer A."/>
            <person name="Schoepfer R."/>
            <person name="Burlingame A.L."/>
        </authorList>
    </citation>
    <scope>IDENTIFICATION BY MASS SPECTROMETRY [LARGE SCALE ANALYSIS]</scope>
    <source>
        <tissue>Brain</tissue>
    </source>
</reference>
<reference key="3">
    <citation type="journal article" date="2010" name="Cell">
        <title>A tissue-specific atlas of mouse protein phosphorylation and expression.</title>
        <authorList>
            <person name="Huttlin E.L."/>
            <person name="Jedrychowski M.P."/>
            <person name="Elias J.E."/>
            <person name="Goswami T."/>
            <person name="Rad R."/>
            <person name="Beausoleil S.A."/>
            <person name="Villen J."/>
            <person name="Haas W."/>
            <person name="Sowa M.E."/>
            <person name="Gygi S.P."/>
        </authorList>
    </citation>
    <scope>IDENTIFICATION BY MASS SPECTROMETRY [LARGE SCALE ANALYSIS]</scope>
    <source>
        <tissue>Brain</tissue>
    </source>
</reference>
<proteinExistence type="evidence at protein level"/>
<comment type="function">
    <text evidence="1">Responsible for the deacetylation of lysine residues on the N-terminal part of the core histones (H2A, H2B, H3 and H4). Histone deacetylation gives a tag for epigenetic repression and plays an important role in transcriptional regulation, cell cycle progression and developmental events. Histone deacetylases act via the formation of large multiprotein complexes (By similarity).</text>
</comment>
<comment type="catalytic activity">
    <reaction>
        <text>N(6)-acetyl-L-lysyl-[histone] + H2O = L-lysyl-[histone] + acetate</text>
        <dbReference type="Rhea" id="RHEA:58196"/>
        <dbReference type="Rhea" id="RHEA-COMP:9845"/>
        <dbReference type="Rhea" id="RHEA-COMP:11338"/>
        <dbReference type="ChEBI" id="CHEBI:15377"/>
        <dbReference type="ChEBI" id="CHEBI:29969"/>
        <dbReference type="ChEBI" id="CHEBI:30089"/>
        <dbReference type="ChEBI" id="CHEBI:61930"/>
        <dbReference type="EC" id="3.5.1.98"/>
    </reaction>
</comment>
<comment type="subunit">
    <text evidence="1">Interacts with HDAC6.</text>
</comment>
<comment type="subcellular location">
    <subcellularLocation>
        <location evidence="1">Nucleus</location>
    </subcellularLocation>
</comment>
<comment type="miscellaneous">
    <text evidence="1">Its activity is inhibited by trapoxin, a known histone deacetylase inhibitor.</text>
</comment>
<comment type="similarity">
    <text evidence="2">Belongs to the histone deacetylase family.</text>
</comment>
<gene>
    <name type="primary">Hdac11</name>
</gene>